<name>NUOB_PSEU2</name>
<feature type="chain" id="PRO_0000376319" description="NADH-quinone oxidoreductase subunit B">
    <location>
        <begin position="1"/>
        <end position="224"/>
    </location>
</feature>
<feature type="region of interest" description="Disordered" evidence="2">
    <location>
        <begin position="201"/>
        <end position="224"/>
    </location>
</feature>
<feature type="compositionally biased region" description="Basic and acidic residues" evidence="2">
    <location>
        <begin position="203"/>
        <end position="212"/>
    </location>
</feature>
<feature type="compositionally biased region" description="Polar residues" evidence="2">
    <location>
        <begin position="213"/>
        <end position="224"/>
    </location>
</feature>
<feature type="binding site" evidence="1">
    <location>
        <position position="67"/>
    </location>
    <ligand>
        <name>[4Fe-4S] cluster</name>
        <dbReference type="ChEBI" id="CHEBI:49883"/>
    </ligand>
</feature>
<feature type="binding site" evidence="1">
    <location>
        <position position="68"/>
    </location>
    <ligand>
        <name>[4Fe-4S] cluster</name>
        <dbReference type="ChEBI" id="CHEBI:49883"/>
    </ligand>
</feature>
<feature type="binding site" evidence="1">
    <location>
        <position position="133"/>
    </location>
    <ligand>
        <name>[4Fe-4S] cluster</name>
        <dbReference type="ChEBI" id="CHEBI:49883"/>
    </ligand>
</feature>
<feature type="binding site" evidence="1">
    <location>
        <position position="162"/>
    </location>
    <ligand>
        <name>[4Fe-4S] cluster</name>
        <dbReference type="ChEBI" id="CHEBI:49883"/>
    </ligand>
</feature>
<gene>
    <name evidence="1" type="primary">nuoB</name>
    <name type="ordered locus">Psyr_3198</name>
</gene>
<sequence>MQYNLTRIDPDAPNEQYPIGKRETVSDPLEDQVHKNIYMGKLEDVLSGAVNWGRKNSLWPYNFGLSCCYVEMTTAFTAPHDIARFGAEVIRASPRQADFMVIAGTCFIKMAPIIQRLYEQMLEPKWVISMGSCANSGGMYDIYSVVQGVDKFLPVDVYVPGCPPRPEAFLQGLMLLQESIGKERRPLSWVVGDQGVYRAEMPSQKEQRREQRIQVTNLRSPDEV</sequence>
<organism>
    <name type="scientific">Pseudomonas syringae pv. syringae (strain B728a)</name>
    <dbReference type="NCBI Taxonomy" id="205918"/>
    <lineage>
        <taxon>Bacteria</taxon>
        <taxon>Pseudomonadati</taxon>
        <taxon>Pseudomonadota</taxon>
        <taxon>Gammaproteobacteria</taxon>
        <taxon>Pseudomonadales</taxon>
        <taxon>Pseudomonadaceae</taxon>
        <taxon>Pseudomonas</taxon>
        <taxon>Pseudomonas syringae</taxon>
    </lineage>
</organism>
<protein>
    <recommendedName>
        <fullName evidence="1">NADH-quinone oxidoreductase subunit B</fullName>
        <ecNumber evidence="1">7.1.1.-</ecNumber>
    </recommendedName>
    <alternativeName>
        <fullName evidence="1">NADH dehydrogenase I subunit B</fullName>
    </alternativeName>
    <alternativeName>
        <fullName evidence="1">NDH-1 subunit B</fullName>
    </alternativeName>
</protein>
<evidence type="ECO:0000255" key="1">
    <source>
        <dbReference type="HAMAP-Rule" id="MF_01356"/>
    </source>
</evidence>
<evidence type="ECO:0000256" key="2">
    <source>
        <dbReference type="SAM" id="MobiDB-lite"/>
    </source>
</evidence>
<keyword id="KW-0004">4Fe-4S</keyword>
<keyword id="KW-0997">Cell inner membrane</keyword>
<keyword id="KW-1003">Cell membrane</keyword>
<keyword id="KW-0408">Iron</keyword>
<keyword id="KW-0411">Iron-sulfur</keyword>
<keyword id="KW-0472">Membrane</keyword>
<keyword id="KW-0479">Metal-binding</keyword>
<keyword id="KW-0520">NAD</keyword>
<keyword id="KW-0874">Quinone</keyword>
<keyword id="KW-1278">Translocase</keyword>
<keyword id="KW-0813">Transport</keyword>
<keyword id="KW-0830">Ubiquinone</keyword>
<accession>Q4ZRJ2</accession>
<comment type="function">
    <text evidence="1">NDH-1 shuttles electrons from NADH, via FMN and iron-sulfur (Fe-S) centers, to quinones in the respiratory chain. The immediate electron acceptor for the enzyme in this species is believed to be ubiquinone. Couples the redox reaction to proton translocation (for every two electrons transferred, four hydrogen ions are translocated across the cytoplasmic membrane), and thus conserves the redox energy in a proton gradient.</text>
</comment>
<comment type="catalytic activity">
    <reaction evidence="1">
        <text>a quinone + NADH + 5 H(+)(in) = a quinol + NAD(+) + 4 H(+)(out)</text>
        <dbReference type="Rhea" id="RHEA:57888"/>
        <dbReference type="ChEBI" id="CHEBI:15378"/>
        <dbReference type="ChEBI" id="CHEBI:24646"/>
        <dbReference type="ChEBI" id="CHEBI:57540"/>
        <dbReference type="ChEBI" id="CHEBI:57945"/>
        <dbReference type="ChEBI" id="CHEBI:132124"/>
    </reaction>
</comment>
<comment type="cofactor">
    <cofactor evidence="1">
        <name>[4Fe-4S] cluster</name>
        <dbReference type="ChEBI" id="CHEBI:49883"/>
    </cofactor>
    <text evidence="1">Binds 1 [4Fe-4S] cluster.</text>
</comment>
<comment type="subunit">
    <text evidence="1">NDH-1 is composed of 13 different subunits. Subunits NuoB, CD, E, F, and G constitute the peripheral sector of the complex.</text>
</comment>
<comment type="subcellular location">
    <subcellularLocation>
        <location evidence="1">Cell inner membrane</location>
        <topology evidence="1">Peripheral membrane protein</topology>
        <orientation evidence="1">Cytoplasmic side</orientation>
    </subcellularLocation>
</comment>
<comment type="similarity">
    <text evidence="1">Belongs to the complex I 20 kDa subunit family.</text>
</comment>
<dbReference type="EC" id="7.1.1.-" evidence="1"/>
<dbReference type="EMBL" id="CP000075">
    <property type="protein sequence ID" value="AAY38230.1"/>
    <property type="molecule type" value="Genomic_DNA"/>
</dbReference>
<dbReference type="RefSeq" id="WP_003405105.1">
    <property type="nucleotide sequence ID" value="NC_007005.1"/>
</dbReference>
<dbReference type="RefSeq" id="YP_236268.1">
    <property type="nucleotide sequence ID" value="NC_007005.1"/>
</dbReference>
<dbReference type="SMR" id="Q4ZRJ2"/>
<dbReference type="STRING" id="205918.Psyr_3198"/>
<dbReference type="KEGG" id="psb:Psyr_3198"/>
<dbReference type="PATRIC" id="fig|205918.7.peg.3265"/>
<dbReference type="eggNOG" id="COG0377">
    <property type="taxonomic scope" value="Bacteria"/>
</dbReference>
<dbReference type="HOGENOM" id="CLU_055737_7_3_6"/>
<dbReference type="OrthoDB" id="9786737at2"/>
<dbReference type="Proteomes" id="UP000000426">
    <property type="component" value="Chromosome"/>
</dbReference>
<dbReference type="GO" id="GO:0005886">
    <property type="term" value="C:plasma membrane"/>
    <property type="evidence" value="ECO:0007669"/>
    <property type="project" value="UniProtKB-SubCell"/>
</dbReference>
<dbReference type="GO" id="GO:0045271">
    <property type="term" value="C:respiratory chain complex I"/>
    <property type="evidence" value="ECO:0007669"/>
    <property type="project" value="TreeGrafter"/>
</dbReference>
<dbReference type="GO" id="GO:0051539">
    <property type="term" value="F:4 iron, 4 sulfur cluster binding"/>
    <property type="evidence" value="ECO:0007669"/>
    <property type="project" value="UniProtKB-KW"/>
</dbReference>
<dbReference type="GO" id="GO:0005506">
    <property type="term" value="F:iron ion binding"/>
    <property type="evidence" value="ECO:0007669"/>
    <property type="project" value="UniProtKB-UniRule"/>
</dbReference>
<dbReference type="GO" id="GO:0008137">
    <property type="term" value="F:NADH dehydrogenase (ubiquinone) activity"/>
    <property type="evidence" value="ECO:0007669"/>
    <property type="project" value="InterPro"/>
</dbReference>
<dbReference type="GO" id="GO:0050136">
    <property type="term" value="F:NADH:ubiquinone reductase (non-electrogenic) activity"/>
    <property type="evidence" value="ECO:0007669"/>
    <property type="project" value="UniProtKB-UniRule"/>
</dbReference>
<dbReference type="GO" id="GO:0048038">
    <property type="term" value="F:quinone binding"/>
    <property type="evidence" value="ECO:0007669"/>
    <property type="project" value="UniProtKB-KW"/>
</dbReference>
<dbReference type="GO" id="GO:0009060">
    <property type="term" value="P:aerobic respiration"/>
    <property type="evidence" value="ECO:0007669"/>
    <property type="project" value="TreeGrafter"/>
</dbReference>
<dbReference type="GO" id="GO:0015990">
    <property type="term" value="P:electron transport coupled proton transport"/>
    <property type="evidence" value="ECO:0007669"/>
    <property type="project" value="TreeGrafter"/>
</dbReference>
<dbReference type="FunFam" id="3.40.50.12280:FF:000002">
    <property type="entry name" value="NADH-quinone oxidoreductase subunit B"/>
    <property type="match status" value="1"/>
</dbReference>
<dbReference type="Gene3D" id="3.40.50.12280">
    <property type="match status" value="1"/>
</dbReference>
<dbReference type="HAMAP" id="MF_01356">
    <property type="entry name" value="NDH1_NuoB"/>
    <property type="match status" value="1"/>
</dbReference>
<dbReference type="InterPro" id="IPR006137">
    <property type="entry name" value="NADH_UbQ_OxRdtase-like_20kDa"/>
</dbReference>
<dbReference type="InterPro" id="IPR006138">
    <property type="entry name" value="NADH_UQ_OxRdtase_20Kd_su"/>
</dbReference>
<dbReference type="NCBIfam" id="TIGR01957">
    <property type="entry name" value="nuoB_fam"/>
    <property type="match status" value="1"/>
</dbReference>
<dbReference type="NCBIfam" id="NF005012">
    <property type="entry name" value="PRK06411.1"/>
    <property type="match status" value="1"/>
</dbReference>
<dbReference type="PANTHER" id="PTHR11995">
    <property type="entry name" value="NADH DEHYDROGENASE"/>
    <property type="match status" value="1"/>
</dbReference>
<dbReference type="PANTHER" id="PTHR11995:SF14">
    <property type="entry name" value="NADH DEHYDROGENASE [UBIQUINONE] IRON-SULFUR PROTEIN 7, MITOCHONDRIAL"/>
    <property type="match status" value="1"/>
</dbReference>
<dbReference type="Pfam" id="PF01058">
    <property type="entry name" value="Oxidored_q6"/>
    <property type="match status" value="1"/>
</dbReference>
<dbReference type="SUPFAM" id="SSF56770">
    <property type="entry name" value="HydA/Nqo6-like"/>
    <property type="match status" value="1"/>
</dbReference>
<dbReference type="PROSITE" id="PS01150">
    <property type="entry name" value="COMPLEX1_20K"/>
    <property type="match status" value="1"/>
</dbReference>
<reference key="1">
    <citation type="journal article" date="2005" name="Proc. Natl. Acad. Sci. U.S.A.">
        <title>Comparison of the complete genome sequences of Pseudomonas syringae pv. syringae B728a and pv. tomato DC3000.</title>
        <authorList>
            <person name="Feil H."/>
            <person name="Feil W.S."/>
            <person name="Chain P."/>
            <person name="Larimer F."/>
            <person name="Dibartolo G."/>
            <person name="Copeland A."/>
            <person name="Lykidis A."/>
            <person name="Trong S."/>
            <person name="Nolan M."/>
            <person name="Goltsman E."/>
            <person name="Thiel J."/>
            <person name="Malfatti S."/>
            <person name="Loper J.E."/>
            <person name="Lapidus A."/>
            <person name="Detter J.C."/>
            <person name="Land M."/>
            <person name="Richardson P.M."/>
            <person name="Kyrpides N.C."/>
            <person name="Ivanova N."/>
            <person name="Lindow S.E."/>
        </authorList>
    </citation>
    <scope>NUCLEOTIDE SEQUENCE [LARGE SCALE GENOMIC DNA]</scope>
    <source>
        <strain>B728a</strain>
    </source>
</reference>
<proteinExistence type="inferred from homology"/>